<evidence type="ECO:0000255" key="1">
    <source>
        <dbReference type="HAMAP-Rule" id="MF_01017"/>
    </source>
</evidence>
<evidence type="ECO:0000256" key="2">
    <source>
        <dbReference type="SAM" id="MobiDB-lite"/>
    </source>
</evidence>
<accession>A9M560</accession>
<sequence>MVKMLVLYYSAYGHMEQMAKAAAEGAREGGAEVTLKRVPELVPEEVAKASHYKIDQEAPIATPGELADYDAIIIGTATRYGMMASQMKNFLDQTGGLWAKGALINKVGSVMVSTATQYGGAELALISTQWQMQHHGMIIVPLSYAYREQMGNDVVRGGAPYGMTTTADGDGSRQPSAQELDGARFQGRRVAEITAKLHG</sequence>
<keyword id="KW-0285">Flavoprotein</keyword>
<keyword id="KW-0288">FMN</keyword>
<keyword id="KW-0520">NAD</keyword>
<keyword id="KW-0521">NADP</keyword>
<keyword id="KW-0547">Nucleotide-binding</keyword>
<keyword id="KW-0560">Oxidoreductase</keyword>
<keyword id="KW-1185">Reference proteome</keyword>
<dbReference type="EC" id="1.6.5.2" evidence="1"/>
<dbReference type="EMBL" id="CP000872">
    <property type="protein sequence ID" value="ABX62115.1"/>
    <property type="molecule type" value="Genomic_DNA"/>
</dbReference>
<dbReference type="SMR" id="A9M560"/>
<dbReference type="CAZy" id="AA6">
    <property type="family name" value="Auxiliary Activities 6"/>
</dbReference>
<dbReference type="GeneID" id="55590738"/>
<dbReference type="KEGG" id="bcs:BCAN_A1063"/>
<dbReference type="HOGENOM" id="CLU_051402_0_2_5"/>
<dbReference type="PhylomeDB" id="A9M560"/>
<dbReference type="Proteomes" id="UP000001385">
    <property type="component" value="Chromosome I"/>
</dbReference>
<dbReference type="GO" id="GO:0016020">
    <property type="term" value="C:membrane"/>
    <property type="evidence" value="ECO:0007669"/>
    <property type="project" value="TreeGrafter"/>
</dbReference>
<dbReference type="GO" id="GO:0050660">
    <property type="term" value="F:flavin adenine dinucleotide binding"/>
    <property type="evidence" value="ECO:0007669"/>
    <property type="project" value="UniProtKB-UniRule"/>
</dbReference>
<dbReference type="GO" id="GO:0010181">
    <property type="term" value="F:FMN binding"/>
    <property type="evidence" value="ECO:0007669"/>
    <property type="project" value="InterPro"/>
</dbReference>
<dbReference type="GO" id="GO:0051287">
    <property type="term" value="F:NAD binding"/>
    <property type="evidence" value="ECO:0007669"/>
    <property type="project" value="UniProtKB-UniRule"/>
</dbReference>
<dbReference type="GO" id="GO:0050136">
    <property type="term" value="F:NADH:ubiquinone reductase (non-electrogenic) activity"/>
    <property type="evidence" value="ECO:0007669"/>
    <property type="project" value="RHEA"/>
</dbReference>
<dbReference type="GO" id="GO:0050661">
    <property type="term" value="F:NADP binding"/>
    <property type="evidence" value="ECO:0007669"/>
    <property type="project" value="UniProtKB-UniRule"/>
</dbReference>
<dbReference type="GO" id="GO:0008753">
    <property type="term" value="F:NADPH dehydrogenase (quinone) activity"/>
    <property type="evidence" value="ECO:0007669"/>
    <property type="project" value="RHEA"/>
</dbReference>
<dbReference type="FunFam" id="3.40.50.360:FF:000001">
    <property type="entry name" value="NAD(P)H dehydrogenase (Quinone) FQR1-like"/>
    <property type="match status" value="1"/>
</dbReference>
<dbReference type="Gene3D" id="3.40.50.360">
    <property type="match status" value="1"/>
</dbReference>
<dbReference type="HAMAP" id="MF_01017">
    <property type="entry name" value="NQOR"/>
    <property type="match status" value="1"/>
</dbReference>
<dbReference type="InterPro" id="IPR008254">
    <property type="entry name" value="Flavodoxin/NO_synth"/>
</dbReference>
<dbReference type="InterPro" id="IPR029039">
    <property type="entry name" value="Flavoprotein-like_sf"/>
</dbReference>
<dbReference type="InterPro" id="IPR010089">
    <property type="entry name" value="Flavoprotein_WrbA-like"/>
</dbReference>
<dbReference type="InterPro" id="IPR005025">
    <property type="entry name" value="FMN_Rdtase-like_dom"/>
</dbReference>
<dbReference type="InterPro" id="IPR037513">
    <property type="entry name" value="NQO"/>
</dbReference>
<dbReference type="NCBIfam" id="TIGR01755">
    <property type="entry name" value="flav_wrbA"/>
    <property type="match status" value="1"/>
</dbReference>
<dbReference type="NCBIfam" id="NF002999">
    <property type="entry name" value="PRK03767.1"/>
    <property type="match status" value="1"/>
</dbReference>
<dbReference type="PANTHER" id="PTHR30546">
    <property type="entry name" value="FLAVODOXIN-RELATED PROTEIN WRBA-RELATED"/>
    <property type="match status" value="1"/>
</dbReference>
<dbReference type="PANTHER" id="PTHR30546:SF23">
    <property type="entry name" value="FLAVOPROTEIN-LIKE PROTEIN YCP4-RELATED"/>
    <property type="match status" value="1"/>
</dbReference>
<dbReference type="Pfam" id="PF03358">
    <property type="entry name" value="FMN_red"/>
    <property type="match status" value="1"/>
</dbReference>
<dbReference type="SUPFAM" id="SSF52218">
    <property type="entry name" value="Flavoproteins"/>
    <property type="match status" value="1"/>
</dbReference>
<dbReference type="PROSITE" id="PS50902">
    <property type="entry name" value="FLAVODOXIN_LIKE"/>
    <property type="match status" value="1"/>
</dbReference>
<proteinExistence type="inferred from homology"/>
<feature type="chain" id="PRO_1000084130" description="NAD(P)H dehydrogenase (quinone)">
    <location>
        <begin position="1"/>
        <end position="199"/>
    </location>
</feature>
<feature type="domain" description="Flavodoxin-like" evidence="1">
    <location>
        <begin position="4"/>
        <end position="190"/>
    </location>
</feature>
<feature type="region of interest" description="Disordered" evidence="2">
    <location>
        <begin position="161"/>
        <end position="181"/>
    </location>
</feature>
<feature type="compositionally biased region" description="Polar residues" evidence="2">
    <location>
        <begin position="163"/>
        <end position="177"/>
    </location>
</feature>
<feature type="binding site" evidence="1">
    <location>
        <begin position="10"/>
        <end position="15"/>
    </location>
    <ligand>
        <name>FMN</name>
        <dbReference type="ChEBI" id="CHEBI:58210"/>
    </ligand>
</feature>
<feature type="binding site" evidence="1">
    <location>
        <position position="12"/>
    </location>
    <ligand>
        <name>NAD(+)</name>
        <dbReference type="ChEBI" id="CHEBI:57540"/>
    </ligand>
</feature>
<feature type="binding site" evidence="1">
    <location>
        <begin position="78"/>
        <end position="80"/>
    </location>
    <ligand>
        <name>FMN</name>
        <dbReference type="ChEBI" id="CHEBI:58210"/>
    </ligand>
</feature>
<feature type="binding site" evidence="1">
    <location>
        <position position="98"/>
    </location>
    <ligand>
        <name>substrate</name>
    </ligand>
</feature>
<feature type="binding site" evidence="1">
    <location>
        <begin position="113"/>
        <end position="119"/>
    </location>
    <ligand>
        <name>FMN</name>
        <dbReference type="ChEBI" id="CHEBI:58210"/>
    </ligand>
</feature>
<feature type="binding site" evidence="1">
    <location>
        <position position="134"/>
    </location>
    <ligand>
        <name>FMN</name>
        <dbReference type="ChEBI" id="CHEBI:58210"/>
    </ligand>
</feature>
<gene>
    <name type="ordered locus">BCAN_A1063</name>
</gene>
<name>NQOR_BRUC2</name>
<organism>
    <name type="scientific">Brucella canis (strain ATCC 23365 / NCTC 10854 / RM-666)</name>
    <dbReference type="NCBI Taxonomy" id="483179"/>
    <lineage>
        <taxon>Bacteria</taxon>
        <taxon>Pseudomonadati</taxon>
        <taxon>Pseudomonadota</taxon>
        <taxon>Alphaproteobacteria</taxon>
        <taxon>Hyphomicrobiales</taxon>
        <taxon>Brucellaceae</taxon>
        <taxon>Brucella/Ochrobactrum group</taxon>
        <taxon>Brucella</taxon>
    </lineage>
</organism>
<protein>
    <recommendedName>
        <fullName evidence="1">NAD(P)H dehydrogenase (quinone)</fullName>
        <ecNumber evidence="1">1.6.5.2</ecNumber>
    </recommendedName>
    <alternativeName>
        <fullName>Flavoprotein WrbA</fullName>
    </alternativeName>
    <alternativeName>
        <fullName evidence="1">NAD(P)H:quinone oxidoreductase</fullName>
        <shortName evidence="1">NQO</shortName>
    </alternativeName>
</protein>
<comment type="catalytic activity">
    <reaction evidence="1">
        <text>a quinone + NADH + H(+) = a quinol + NAD(+)</text>
        <dbReference type="Rhea" id="RHEA:46160"/>
        <dbReference type="ChEBI" id="CHEBI:15378"/>
        <dbReference type="ChEBI" id="CHEBI:24646"/>
        <dbReference type="ChEBI" id="CHEBI:57540"/>
        <dbReference type="ChEBI" id="CHEBI:57945"/>
        <dbReference type="ChEBI" id="CHEBI:132124"/>
        <dbReference type="EC" id="1.6.5.2"/>
    </reaction>
</comment>
<comment type="catalytic activity">
    <reaction evidence="1">
        <text>a quinone + NADPH + H(+) = a quinol + NADP(+)</text>
        <dbReference type="Rhea" id="RHEA:46164"/>
        <dbReference type="ChEBI" id="CHEBI:15378"/>
        <dbReference type="ChEBI" id="CHEBI:24646"/>
        <dbReference type="ChEBI" id="CHEBI:57783"/>
        <dbReference type="ChEBI" id="CHEBI:58349"/>
        <dbReference type="ChEBI" id="CHEBI:132124"/>
        <dbReference type="EC" id="1.6.5.2"/>
    </reaction>
</comment>
<comment type="cofactor">
    <cofactor evidence="1">
        <name>FMN</name>
        <dbReference type="ChEBI" id="CHEBI:58210"/>
    </cofactor>
    <text evidence="1">Binds 1 FMN per monomer.</text>
</comment>
<comment type="similarity">
    <text evidence="1">Belongs to the WrbA family.</text>
</comment>
<reference key="1">
    <citation type="submission" date="2007-10" db="EMBL/GenBank/DDBJ databases">
        <title>Brucella canis ATCC 23365 whole genome shotgun sequencing project.</title>
        <authorList>
            <person name="Setubal J.C."/>
            <person name="Bowns C."/>
            <person name="Boyle S."/>
            <person name="Crasta O.R."/>
            <person name="Czar M.J."/>
            <person name="Dharmanolla C."/>
            <person name="Gillespie J.J."/>
            <person name="Kenyon R.W."/>
            <person name="Lu J."/>
            <person name="Mane S."/>
            <person name="Mohapatra S."/>
            <person name="Nagrani S."/>
            <person name="Purkayastha A."/>
            <person name="Rajasimha H.K."/>
            <person name="Shallom J.M."/>
            <person name="Shallom S."/>
            <person name="Shukla M."/>
            <person name="Snyder E.E."/>
            <person name="Sobral B.W."/>
            <person name="Wattam A.R."/>
            <person name="Will R."/>
            <person name="Williams K."/>
            <person name="Yoo H."/>
            <person name="Bruce D."/>
            <person name="Detter C."/>
            <person name="Munk C."/>
            <person name="Brettin T.S."/>
        </authorList>
    </citation>
    <scope>NUCLEOTIDE SEQUENCE [LARGE SCALE GENOMIC DNA]</scope>
    <source>
        <strain>ATCC 23365 / NCTC 10854 / RM-666</strain>
    </source>
</reference>